<gene>
    <name evidence="1" type="primary">rpmG</name>
    <name type="ordered locus">lpl0519</name>
</gene>
<protein>
    <recommendedName>
        <fullName evidence="1">Large ribosomal subunit protein bL33</fullName>
    </recommendedName>
    <alternativeName>
        <fullName evidence="2">50S ribosomal protein L33</fullName>
    </alternativeName>
</protein>
<reference key="1">
    <citation type="journal article" date="2004" name="Nat. Genet.">
        <title>Evidence in the Legionella pneumophila genome for exploitation of host cell functions and high genome plasticity.</title>
        <authorList>
            <person name="Cazalet C."/>
            <person name="Rusniok C."/>
            <person name="Brueggemann H."/>
            <person name="Zidane N."/>
            <person name="Magnier A."/>
            <person name="Ma L."/>
            <person name="Tichit M."/>
            <person name="Jarraud S."/>
            <person name="Bouchier C."/>
            <person name="Vandenesch F."/>
            <person name="Kunst F."/>
            <person name="Etienne J."/>
            <person name="Glaser P."/>
            <person name="Buchrieser C."/>
        </authorList>
    </citation>
    <scope>NUCLEOTIDE SEQUENCE [LARGE SCALE GENOMIC DNA]</scope>
    <source>
        <strain>Lens</strain>
    </source>
</reference>
<keyword id="KW-0687">Ribonucleoprotein</keyword>
<keyword id="KW-0689">Ribosomal protein</keyword>
<feature type="chain" id="PRO_0000356523" description="Large ribosomal subunit protein bL33">
    <location>
        <begin position="1"/>
        <end position="54"/>
    </location>
</feature>
<evidence type="ECO:0000255" key="1">
    <source>
        <dbReference type="HAMAP-Rule" id="MF_00294"/>
    </source>
</evidence>
<evidence type="ECO:0000305" key="2"/>
<comment type="similarity">
    <text evidence="1">Belongs to the bacterial ribosomal protein bL33 family.</text>
</comment>
<organism>
    <name type="scientific">Legionella pneumophila (strain Lens)</name>
    <dbReference type="NCBI Taxonomy" id="297245"/>
    <lineage>
        <taxon>Bacteria</taxon>
        <taxon>Pseudomonadati</taxon>
        <taxon>Pseudomonadota</taxon>
        <taxon>Gammaproteobacteria</taxon>
        <taxon>Legionellales</taxon>
        <taxon>Legionellaceae</taxon>
        <taxon>Legionella</taxon>
    </lineage>
</organism>
<accession>Q5WZ63</accession>
<sequence length="54" mass="6315">MAAVTIKVKMESTAGTGYYKTTTKNPRNHPEKMELMMYDPKVRKHVLFKEKKVK</sequence>
<name>RL33_LEGPL</name>
<proteinExistence type="inferred from homology"/>
<dbReference type="EMBL" id="CR628337">
    <property type="protein sequence ID" value="CAH14749.1"/>
    <property type="molecule type" value="Genomic_DNA"/>
</dbReference>
<dbReference type="RefSeq" id="WP_003635328.1">
    <property type="nucleotide sequence ID" value="NC_006369.1"/>
</dbReference>
<dbReference type="SMR" id="Q5WZ63"/>
<dbReference type="GeneID" id="98066954"/>
<dbReference type="KEGG" id="lpf:lpl0519"/>
<dbReference type="LegioList" id="lpl0519"/>
<dbReference type="HOGENOM" id="CLU_190949_1_1_6"/>
<dbReference type="Proteomes" id="UP000002517">
    <property type="component" value="Chromosome"/>
</dbReference>
<dbReference type="GO" id="GO:0005737">
    <property type="term" value="C:cytoplasm"/>
    <property type="evidence" value="ECO:0007669"/>
    <property type="project" value="UniProtKB-ARBA"/>
</dbReference>
<dbReference type="GO" id="GO:0015934">
    <property type="term" value="C:large ribosomal subunit"/>
    <property type="evidence" value="ECO:0007669"/>
    <property type="project" value="TreeGrafter"/>
</dbReference>
<dbReference type="GO" id="GO:0003735">
    <property type="term" value="F:structural constituent of ribosome"/>
    <property type="evidence" value="ECO:0007669"/>
    <property type="project" value="InterPro"/>
</dbReference>
<dbReference type="GO" id="GO:0006412">
    <property type="term" value="P:translation"/>
    <property type="evidence" value="ECO:0007669"/>
    <property type="project" value="UniProtKB-UniRule"/>
</dbReference>
<dbReference type="Gene3D" id="2.20.28.120">
    <property type="entry name" value="Ribosomal protein L33"/>
    <property type="match status" value="1"/>
</dbReference>
<dbReference type="HAMAP" id="MF_00294">
    <property type="entry name" value="Ribosomal_bL33"/>
    <property type="match status" value="1"/>
</dbReference>
<dbReference type="InterPro" id="IPR001705">
    <property type="entry name" value="Ribosomal_bL33"/>
</dbReference>
<dbReference type="InterPro" id="IPR038584">
    <property type="entry name" value="Ribosomal_bL33_sf"/>
</dbReference>
<dbReference type="InterPro" id="IPR011332">
    <property type="entry name" value="Ribosomal_zn-bd"/>
</dbReference>
<dbReference type="NCBIfam" id="NF001860">
    <property type="entry name" value="PRK00595.1"/>
    <property type="match status" value="1"/>
</dbReference>
<dbReference type="NCBIfam" id="TIGR01023">
    <property type="entry name" value="rpmG_bact"/>
    <property type="match status" value="1"/>
</dbReference>
<dbReference type="PANTHER" id="PTHR15238">
    <property type="entry name" value="54S RIBOSOMAL PROTEIN L39, MITOCHONDRIAL"/>
    <property type="match status" value="1"/>
</dbReference>
<dbReference type="PANTHER" id="PTHR15238:SF1">
    <property type="entry name" value="LARGE RIBOSOMAL SUBUNIT PROTEIN BL33M"/>
    <property type="match status" value="1"/>
</dbReference>
<dbReference type="Pfam" id="PF00471">
    <property type="entry name" value="Ribosomal_L33"/>
    <property type="match status" value="1"/>
</dbReference>
<dbReference type="SUPFAM" id="SSF57829">
    <property type="entry name" value="Zn-binding ribosomal proteins"/>
    <property type="match status" value="1"/>
</dbReference>